<evidence type="ECO:0000250" key="1"/>
<evidence type="ECO:0000250" key="2">
    <source>
        <dbReference type="UniProtKB" id="P00157"/>
    </source>
</evidence>
<evidence type="ECO:0000255" key="3">
    <source>
        <dbReference type="PROSITE-ProRule" id="PRU00967"/>
    </source>
</evidence>
<evidence type="ECO:0000255" key="4">
    <source>
        <dbReference type="PROSITE-ProRule" id="PRU00968"/>
    </source>
</evidence>
<name>CYB_BALBO</name>
<feature type="chain" id="PRO_0000060659" description="Cytochrome b">
    <location>
        <begin position="1"/>
        <end position="379"/>
    </location>
</feature>
<feature type="transmembrane region" description="Helical" evidence="2">
    <location>
        <begin position="33"/>
        <end position="53"/>
    </location>
</feature>
<feature type="transmembrane region" description="Helical" evidence="2">
    <location>
        <begin position="77"/>
        <end position="98"/>
    </location>
</feature>
<feature type="transmembrane region" description="Helical" evidence="2">
    <location>
        <begin position="113"/>
        <end position="133"/>
    </location>
</feature>
<feature type="transmembrane region" description="Helical" evidence="2">
    <location>
        <begin position="178"/>
        <end position="198"/>
    </location>
</feature>
<feature type="transmembrane region" description="Helical" evidence="2">
    <location>
        <begin position="226"/>
        <end position="246"/>
    </location>
</feature>
<feature type="transmembrane region" description="Helical" evidence="2">
    <location>
        <begin position="288"/>
        <end position="308"/>
    </location>
</feature>
<feature type="transmembrane region" description="Helical" evidence="2">
    <location>
        <begin position="320"/>
        <end position="340"/>
    </location>
</feature>
<feature type="transmembrane region" description="Helical" evidence="2">
    <location>
        <begin position="347"/>
        <end position="367"/>
    </location>
</feature>
<feature type="binding site" description="axial binding residue" evidence="2">
    <location>
        <position position="83"/>
    </location>
    <ligand>
        <name>heme b</name>
        <dbReference type="ChEBI" id="CHEBI:60344"/>
        <label>b562</label>
    </ligand>
    <ligandPart>
        <name>Fe</name>
        <dbReference type="ChEBI" id="CHEBI:18248"/>
    </ligandPart>
</feature>
<feature type="binding site" description="axial binding residue" evidence="2">
    <location>
        <position position="97"/>
    </location>
    <ligand>
        <name>heme b</name>
        <dbReference type="ChEBI" id="CHEBI:60344"/>
        <label>b566</label>
    </ligand>
    <ligandPart>
        <name>Fe</name>
        <dbReference type="ChEBI" id="CHEBI:18248"/>
    </ligandPart>
</feature>
<feature type="binding site" description="axial binding residue" evidence="2">
    <location>
        <position position="182"/>
    </location>
    <ligand>
        <name>heme b</name>
        <dbReference type="ChEBI" id="CHEBI:60344"/>
        <label>b562</label>
    </ligand>
    <ligandPart>
        <name>Fe</name>
        <dbReference type="ChEBI" id="CHEBI:18248"/>
    </ligandPart>
</feature>
<feature type="binding site" description="axial binding residue" evidence="2">
    <location>
        <position position="196"/>
    </location>
    <ligand>
        <name>heme b</name>
        <dbReference type="ChEBI" id="CHEBI:60344"/>
        <label>b566</label>
    </ligand>
    <ligandPart>
        <name>Fe</name>
        <dbReference type="ChEBI" id="CHEBI:18248"/>
    </ligandPart>
</feature>
<feature type="binding site" evidence="2">
    <location>
        <position position="201"/>
    </location>
    <ligand>
        <name>a ubiquinone</name>
        <dbReference type="ChEBI" id="CHEBI:16389"/>
    </ligand>
</feature>
<gene>
    <name type="primary">MT-CYB</name>
    <name type="synonym">COB</name>
    <name type="synonym">CYTB</name>
    <name type="synonym">MTCYB</name>
</gene>
<reference key="1">
    <citation type="journal article" date="1994" name="Nature">
        <title>Relationship of baleen whales established by cytochrome b gene sequence comparison.</title>
        <authorList>
            <person name="Arnason U."/>
            <person name="Gullberg A."/>
        </authorList>
    </citation>
    <scope>NUCLEOTIDE SEQUENCE [GENOMIC DNA]</scope>
</reference>
<sequence length="379" mass="42819">MTNIRKTHPLMKIVNDTFVDLPTPSNISSWWNFGSLLGLCLITQILTGLFLAMHYTPDTTTAFSSVTHICRDVNYGWIIRYLHANGASMFFICLYAHMGRGLYYGSYAFRETWNIGVILLFTVMATAFVGYVLPWGQMSFWGATVITNLLSAIPYIGTTLVEWIWGGFSVDKATLTRFFAFHFILPFIILALAMVHLIFLHETGSNNPTGIPSDMDKIPFHPYYTVKDILGALLLILTLLMLTLFAPDLLGDPDNYTPANPLSTPAHIKPEWYFLFAYAILRSIPNKLGGVLALLLSILILALIPMLHTSKQRSMMFRPFSQFLFWVLVADLLTLTWIGGQPVEHPYVIVGQFASILYFLLILVLMPATSLIENKLMKW</sequence>
<proteinExistence type="inferred from homology"/>
<protein>
    <recommendedName>
        <fullName>Cytochrome b</fullName>
    </recommendedName>
    <alternativeName>
        <fullName>Complex III subunit 3</fullName>
    </alternativeName>
    <alternativeName>
        <fullName>Complex III subunit III</fullName>
    </alternativeName>
    <alternativeName>
        <fullName>Cytochrome b-c1 complex subunit 3</fullName>
    </alternativeName>
    <alternativeName>
        <fullName>Ubiquinol-cytochrome-c reductase complex cytochrome b subunit</fullName>
    </alternativeName>
</protein>
<comment type="function">
    <text evidence="2">Component of the ubiquinol-cytochrome c reductase complex (complex III or cytochrome b-c1 complex) that is part of the mitochondrial respiratory chain. The b-c1 complex mediates electron transfer from ubiquinol to cytochrome c. Contributes to the generation of a proton gradient across the mitochondrial membrane that is then used for ATP synthesis.</text>
</comment>
<comment type="cofactor">
    <cofactor evidence="2">
        <name>heme b</name>
        <dbReference type="ChEBI" id="CHEBI:60344"/>
    </cofactor>
    <text evidence="2">Binds 2 heme b groups non-covalently.</text>
</comment>
<comment type="subunit">
    <text evidence="2">The cytochrome bc1 complex contains 11 subunits: 3 respiratory subunits (MT-CYB, CYC1 and UQCRFS1), 2 core proteins (UQCRC1 and UQCRC2) and 6 low-molecular weight proteins (UQCRH/QCR6, UQCRB/QCR7, UQCRQ/QCR8, UQCR10/QCR9, UQCR11/QCR10 and a cleavage product of UQCRFS1). This cytochrome bc1 complex then forms a dimer.</text>
</comment>
<comment type="subcellular location">
    <subcellularLocation>
        <location evidence="2">Mitochondrion inner membrane</location>
        <topology evidence="2">Multi-pass membrane protein</topology>
    </subcellularLocation>
</comment>
<comment type="miscellaneous">
    <text evidence="1">Heme 1 (or BL or b562) is low-potential and absorbs at about 562 nm, and heme 2 (or BH or b566) is high-potential and absorbs at about 566 nm.</text>
</comment>
<comment type="similarity">
    <text evidence="3 4">Belongs to the cytochrome b family.</text>
</comment>
<comment type="caution">
    <text evidence="2">The full-length protein contains only eight transmembrane helices, not nine as predicted by bioinformatics tools.</text>
</comment>
<accession>P41282</accession>
<keyword id="KW-0249">Electron transport</keyword>
<keyword id="KW-0349">Heme</keyword>
<keyword id="KW-0408">Iron</keyword>
<keyword id="KW-0472">Membrane</keyword>
<keyword id="KW-0479">Metal-binding</keyword>
<keyword id="KW-0496">Mitochondrion</keyword>
<keyword id="KW-0999">Mitochondrion inner membrane</keyword>
<keyword id="KW-0679">Respiratory chain</keyword>
<keyword id="KW-0812">Transmembrane</keyword>
<keyword id="KW-1133">Transmembrane helix</keyword>
<keyword id="KW-0813">Transport</keyword>
<keyword id="KW-0830">Ubiquinone</keyword>
<organism>
    <name type="scientific">Balaenoptera borealis</name>
    <name type="common">Sei whale</name>
    <name type="synonym">Pollack whale</name>
    <dbReference type="NCBI Taxonomy" id="9768"/>
    <lineage>
        <taxon>Eukaryota</taxon>
        <taxon>Metazoa</taxon>
        <taxon>Chordata</taxon>
        <taxon>Craniata</taxon>
        <taxon>Vertebrata</taxon>
        <taxon>Euteleostomi</taxon>
        <taxon>Mammalia</taxon>
        <taxon>Eutheria</taxon>
        <taxon>Laurasiatheria</taxon>
        <taxon>Artiodactyla</taxon>
        <taxon>Whippomorpha</taxon>
        <taxon>Cetacea</taxon>
        <taxon>Mysticeti</taxon>
        <taxon>Balaenopteridae</taxon>
        <taxon>Balaenoptera</taxon>
    </lineage>
</organism>
<dbReference type="EMBL" id="X75582">
    <property type="protein sequence ID" value="CAA53258.1"/>
    <property type="molecule type" value="Genomic_DNA"/>
</dbReference>
<dbReference type="PIR" id="S43263">
    <property type="entry name" value="S43263"/>
</dbReference>
<dbReference type="SMR" id="P41282"/>
<dbReference type="GO" id="GO:0005743">
    <property type="term" value="C:mitochondrial inner membrane"/>
    <property type="evidence" value="ECO:0007669"/>
    <property type="project" value="UniProtKB-SubCell"/>
</dbReference>
<dbReference type="GO" id="GO:0045275">
    <property type="term" value="C:respiratory chain complex III"/>
    <property type="evidence" value="ECO:0007669"/>
    <property type="project" value="InterPro"/>
</dbReference>
<dbReference type="GO" id="GO:0046872">
    <property type="term" value="F:metal ion binding"/>
    <property type="evidence" value="ECO:0007669"/>
    <property type="project" value="UniProtKB-KW"/>
</dbReference>
<dbReference type="GO" id="GO:0008121">
    <property type="term" value="F:ubiquinol-cytochrome-c reductase activity"/>
    <property type="evidence" value="ECO:0007669"/>
    <property type="project" value="InterPro"/>
</dbReference>
<dbReference type="GO" id="GO:0006122">
    <property type="term" value="P:mitochondrial electron transport, ubiquinol to cytochrome c"/>
    <property type="evidence" value="ECO:0007669"/>
    <property type="project" value="TreeGrafter"/>
</dbReference>
<dbReference type="CDD" id="cd00290">
    <property type="entry name" value="cytochrome_b_C"/>
    <property type="match status" value="1"/>
</dbReference>
<dbReference type="CDD" id="cd00284">
    <property type="entry name" value="Cytochrome_b_N"/>
    <property type="match status" value="1"/>
</dbReference>
<dbReference type="FunFam" id="1.20.810.10:FF:000002">
    <property type="entry name" value="Cytochrome b"/>
    <property type="match status" value="1"/>
</dbReference>
<dbReference type="Gene3D" id="1.20.810.10">
    <property type="entry name" value="Cytochrome Bc1 Complex, Chain C"/>
    <property type="match status" value="1"/>
</dbReference>
<dbReference type="InterPro" id="IPR005798">
    <property type="entry name" value="Cyt_b/b6_C"/>
</dbReference>
<dbReference type="InterPro" id="IPR036150">
    <property type="entry name" value="Cyt_b/b6_C_sf"/>
</dbReference>
<dbReference type="InterPro" id="IPR005797">
    <property type="entry name" value="Cyt_b/b6_N"/>
</dbReference>
<dbReference type="InterPro" id="IPR027387">
    <property type="entry name" value="Cytb/b6-like_sf"/>
</dbReference>
<dbReference type="InterPro" id="IPR030689">
    <property type="entry name" value="Cytochrome_b"/>
</dbReference>
<dbReference type="InterPro" id="IPR048260">
    <property type="entry name" value="Cytochrome_b_C_euk/bac"/>
</dbReference>
<dbReference type="InterPro" id="IPR048259">
    <property type="entry name" value="Cytochrome_b_N_euk/bac"/>
</dbReference>
<dbReference type="InterPro" id="IPR016174">
    <property type="entry name" value="Di-haem_cyt_TM"/>
</dbReference>
<dbReference type="PANTHER" id="PTHR19271">
    <property type="entry name" value="CYTOCHROME B"/>
    <property type="match status" value="1"/>
</dbReference>
<dbReference type="PANTHER" id="PTHR19271:SF16">
    <property type="entry name" value="CYTOCHROME B"/>
    <property type="match status" value="1"/>
</dbReference>
<dbReference type="Pfam" id="PF00032">
    <property type="entry name" value="Cytochrom_B_C"/>
    <property type="match status" value="1"/>
</dbReference>
<dbReference type="Pfam" id="PF00033">
    <property type="entry name" value="Cytochrome_B"/>
    <property type="match status" value="1"/>
</dbReference>
<dbReference type="PIRSF" id="PIRSF038885">
    <property type="entry name" value="COB"/>
    <property type="match status" value="1"/>
</dbReference>
<dbReference type="SUPFAM" id="SSF81648">
    <property type="entry name" value="a domain/subunit of cytochrome bc1 complex (Ubiquinol-cytochrome c reductase)"/>
    <property type="match status" value="1"/>
</dbReference>
<dbReference type="SUPFAM" id="SSF81342">
    <property type="entry name" value="Transmembrane di-heme cytochromes"/>
    <property type="match status" value="1"/>
</dbReference>
<dbReference type="PROSITE" id="PS51003">
    <property type="entry name" value="CYTB_CTER"/>
    <property type="match status" value="1"/>
</dbReference>
<dbReference type="PROSITE" id="PS51002">
    <property type="entry name" value="CYTB_NTER"/>
    <property type="match status" value="1"/>
</dbReference>
<geneLocation type="mitochondrion"/>